<name>COBQ_BRUA1</name>
<organism>
    <name type="scientific">Brucella abortus (strain S19)</name>
    <dbReference type="NCBI Taxonomy" id="430066"/>
    <lineage>
        <taxon>Bacteria</taxon>
        <taxon>Pseudomonadati</taxon>
        <taxon>Pseudomonadota</taxon>
        <taxon>Alphaproteobacteria</taxon>
        <taxon>Hyphomicrobiales</taxon>
        <taxon>Brucellaceae</taxon>
        <taxon>Brucella/Ochrobactrum group</taxon>
        <taxon>Brucella</taxon>
    </lineage>
</organism>
<keyword id="KW-0169">Cobalamin biosynthesis</keyword>
<keyword id="KW-0315">Glutamine amidotransferase</keyword>
<comment type="function">
    <text evidence="1">Catalyzes amidations at positions B, D, E, and G on adenosylcobyrinic A,C-diamide. NH(2) groups are provided by glutamine, and one molecule of ATP is hydrogenolyzed for each amidation.</text>
</comment>
<comment type="pathway">
    <text evidence="1">Cofactor biosynthesis; adenosylcobalamin biosynthesis.</text>
</comment>
<comment type="similarity">
    <text evidence="1">Belongs to the CobB/CobQ family. CobQ subfamily.</text>
</comment>
<feature type="chain" id="PRO_1000090219" description="Cobyric acid synthase">
    <location>
        <begin position="1"/>
        <end position="483"/>
    </location>
</feature>
<feature type="domain" description="GATase cobBQ-type" evidence="1">
    <location>
        <begin position="251"/>
        <end position="438"/>
    </location>
</feature>
<feature type="active site" description="Nucleophile" evidence="1">
    <location>
        <position position="333"/>
    </location>
</feature>
<feature type="active site" evidence="1">
    <location>
        <position position="430"/>
    </location>
</feature>
<reference key="1">
    <citation type="journal article" date="2008" name="PLoS ONE">
        <title>Genome sequence of Brucella abortus vaccine strain S19 compared to virulent strains yields candidate virulence genes.</title>
        <authorList>
            <person name="Crasta O.R."/>
            <person name="Folkerts O."/>
            <person name="Fei Z."/>
            <person name="Mane S.P."/>
            <person name="Evans C."/>
            <person name="Martino-Catt S."/>
            <person name="Bricker B."/>
            <person name="Yu G."/>
            <person name="Du L."/>
            <person name="Sobral B.W."/>
        </authorList>
    </citation>
    <scope>NUCLEOTIDE SEQUENCE [LARGE SCALE GENOMIC DNA]</scope>
    <source>
        <strain>S19</strain>
    </source>
</reference>
<protein>
    <recommendedName>
        <fullName evidence="1">Cobyric acid synthase</fullName>
    </recommendedName>
</protein>
<accession>B2S6E8</accession>
<evidence type="ECO:0000255" key="1">
    <source>
        <dbReference type="HAMAP-Rule" id="MF_00028"/>
    </source>
</evidence>
<proteinExistence type="inferred from homology"/>
<gene>
    <name evidence="1" type="primary">cobQ</name>
    <name type="ordered locus">BAbS19_I12440</name>
</gene>
<dbReference type="EMBL" id="CP000887">
    <property type="protein sequence ID" value="ACD72745.1"/>
    <property type="molecule type" value="Genomic_DNA"/>
</dbReference>
<dbReference type="RefSeq" id="WP_002966865.1">
    <property type="nucleotide sequence ID" value="NC_010742.1"/>
</dbReference>
<dbReference type="SMR" id="B2S6E8"/>
<dbReference type="KEGG" id="bmc:BAbS19_I12440"/>
<dbReference type="HOGENOM" id="CLU_019250_2_2_5"/>
<dbReference type="UniPathway" id="UPA00148"/>
<dbReference type="Proteomes" id="UP000002565">
    <property type="component" value="Chromosome 1"/>
</dbReference>
<dbReference type="GO" id="GO:0015420">
    <property type="term" value="F:ABC-type vitamin B12 transporter activity"/>
    <property type="evidence" value="ECO:0007669"/>
    <property type="project" value="UniProtKB-UniRule"/>
</dbReference>
<dbReference type="GO" id="GO:0003824">
    <property type="term" value="F:catalytic activity"/>
    <property type="evidence" value="ECO:0007669"/>
    <property type="project" value="InterPro"/>
</dbReference>
<dbReference type="GO" id="GO:0009236">
    <property type="term" value="P:cobalamin biosynthetic process"/>
    <property type="evidence" value="ECO:0007669"/>
    <property type="project" value="UniProtKB-UniRule"/>
</dbReference>
<dbReference type="CDD" id="cd05389">
    <property type="entry name" value="CobQ_N"/>
    <property type="match status" value="1"/>
</dbReference>
<dbReference type="CDD" id="cd01750">
    <property type="entry name" value="GATase1_CobQ"/>
    <property type="match status" value="1"/>
</dbReference>
<dbReference type="Gene3D" id="3.40.50.880">
    <property type="match status" value="1"/>
</dbReference>
<dbReference type="Gene3D" id="3.40.50.300">
    <property type="entry name" value="P-loop containing nucleotide triphosphate hydrolases"/>
    <property type="match status" value="1"/>
</dbReference>
<dbReference type="HAMAP" id="MF_00028">
    <property type="entry name" value="CobQ"/>
    <property type="match status" value="1"/>
</dbReference>
<dbReference type="InterPro" id="IPR029062">
    <property type="entry name" value="Class_I_gatase-like"/>
</dbReference>
<dbReference type="InterPro" id="IPR002586">
    <property type="entry name" value="CobQ/CobB/MinD/ParA_Nub-bd_dom"/>
</dbReference>
<dbReference type="InterPro" id="IPR033949">
    <property type="entry name" value="CobQ_GATase1"/>
</dbReference>
<dbReference type="InterPro" id="IPR047045">
    <property type="entry name" value="CobQ_N"/>
</dbReference>
<dbReference type="InterPro" id="IPR004459">
    <property type="entry name" value="CobQ_synth"/>
</dbReference>
<dbReference type="InterPro" id="IPR011698">
    <property type="entry name" value="GATase_3"/>
</dbReference>
<dbReference type="InterPro" id="IPR027417">
    <property type="entry name" value="P-loop_NTPase"/>
</dbReference>
<dbReference type="NCBIfam" id="TIGR00313">
    <property type="entry name" value="cobQ"/>
    <property type="match status" value="1"/>
</dbReference>
<dbReference type="NCBIfam" id="NF001989">
    <property type="entry name" value="PRK00784.1"/>
    <property type="match status" value="1"/>
</dbReference>
<dbReference type="PANTHER" id="PTHR21343:SF1">
    <property type="entry name" value="COBYRIC ACID SYNTHASE"/>
    <property type="match status" value="1"/>
</dbReference>
<dbReference type="PANTHER" id="PTHR21343">
    <property type="entry name" value="DETHIOBIOTIN SYNTHETASE"/>
    <property type="match status" value="1"/>
</dbReference>
<dbReference type="Pfam" id="PF01656">
    <property type="entry name" value="CbiA"/>
    <property type="match status" value="1"/>
</dbReference>
<dbReference type="Pfam" id="PF07685">
    <property type="entry name" value="GATase_3"/>
    <property type="match status" value="1"/>
</dbReference>
<dbReference type="SUPFAM" id="SSF52317">
    <property type="entry name" value="Class I glutamine amidotransferase-like"/>
    <property type="match status" value="1"/>
</dbReference>
<dbReference type="SUPFAM" id="SSF52540">
    <property type="entry name" value="P-loop containing nucleoside triphosphate hydrolases"/>
    <property type="match status" value="1"/>
</dbReference>
<dbReference type="PROSITE" id="PS51274">
    <property type="entry name" value="GATASE_COBBQ"/>
    <property type="match status" value="1"/>
</dbReference>
<sequence length="483" mass="51631">MARAIMFQGTGSDVGKSVLVAGLCRVARNRGLKVRPFKPQNMSNNAAVSDDGGEIGRAQWLQALACGVPSSVHMNPVLLKPQTDMGSQLIVQGQVRGEARGRYYQELKPQLMAAVMESFAKVGDGADLVLVEGAGSPAEINLRAGDIANMGFATHADVPVVLVGDIDRGGVIASLVGTHTILPQEDRAMVRGFLINKFRGDISLFDDGLAAITRFTGWRSFGVVPWLKAVSRLPAEDSVVLERAVRGDKKALIVAVPMLPRIANFDDLDPLKAEPAVEVVMVPPGSSLPADAGLVVLPGTKSTIADLLALRENGWDRELVAHVKRGGHVLGICGGFQMLGRRISDPAGIEGNVRDIEGLGLLDIETMTEPEKVVRNVEAVSLLHDEPLEGYEIHIGRTSGPDMARPFARIGDHDDGAVSPDGRIMGTYLHGIFSADRFRHHFLRALGVEGGQMNYRESVEEALGELAEGLEASLDIDGLFALA</sequence>